<comment type="function">
    <text evidence="1">Functions in the biosynthesis of branched-chain amino acids. Catalyzes the dehydration of (2R,3R)-2,3-dihydroxy-3-methylpentanoate (2,3-dihydroxy-3-methylvalerate) into 2-oxo-3-methylpentanoate (2-oxo-3-methylvalerate) and of (2R)-2,3-dihydroxy-3-methylbutanoate (2,3-dihydroxyisovalerate) into 2-oxo-3-methylbutanoate (2-oxoisovalerate), the penultimate precursor to L-isoleucine and L-valine, respectively.</text>
</comment>
<comment type="catalytic activity">
    <reaction evidence="1">
        <text>(2R)-2,3-dihydroxy-3-methylbutanoate = 3-methyl-2-oxobutanoate + H2O</text>
        <dbReference type="Rhea" id="RHEA:24809"/>
        <dbReference type="ChEBI" id="CHEBI:11851"/>
        <dbReference type="ChEBI" id="CHEBI:15377"/>
        <dbReference type="ChEBI" id="CHEBI:49072"/>
        <dbReference type="EC" id="4.2.1.9"/>
    </reaction>
    <physiologicalReaction direction="left-to-right" evidence="1">
        <dbReference type="Rhea" id="RHEA:24810"/>
    </physiologicalReaction>
</comment>
<comment type="catalytic activity">
    <reaction evidence="1">
        <text>(2R,3R)-2,3-dihydroxy-3-methylpentanoate = (S)-3-methyl-2-oxopentanoate + H2O</text>
        <dbReference type="Rhea" id="RHEA:27694"/>
        <dbReference type="ChEBI" id="CHEBI:15377"/>
        <dbReference type="ChEBI" id="CHEBI:35146"/>
        <dbReference type="ChEBI" id="CHEBI:49258"/>
        <dbReference type="EC" id="4.2.1.9"/>
    </reaction>
    <physiologicalReaction direction="left-to-right" evidence="1">
        <dbReference type="Rhea" id="RHEA:27695"/>
    </physiologicalReaction>
</comment>
<comment type="cofactor">
    <cofactor evidence="1">
        <name>[2Fe-2S] cluster</name>
        <dbReference type="ChEBI" id="CHEBI:190135"/>
    </cofactor>
    <text evidence="1">Binds 1 [2Fe-2S] cluster per subunit. This cluster acts as a Lewis acid cofactor.</text>
</comment>
<comment type="cofactor">
    <cofactor evidence="1">
        <name>Mg(2+)</name>
        <dbReference type="ChEBI" id="CHEBI:18420"/>
    </cofactor>
</comment>
<comment type="pathway">
    <text evidence="1">Amino-acid biosynthesis; L-isoleucine biosynthesis; L-isoleucine from 2-oxobutanoate: step 3/4.</text>
</comment>
<comment type="pathway">
    <text evidence="1">Amino-acid biosynthesis; L-valine biosynthesis; L-valine from pyruvate: step 3/4.</text>
</comment>
<comment type="subunit">
    <text evidence="1">Homodimer.</text>
</comment>
<comment type="similarity">
    <text evidence="1">Belongs to the IlvD/Edd family.</text>
</comment>
<comment type="sequence caution" evidence="2">
    <conflict type="erroneous initiation">
        <sequence resource="EMBL-CDS" id="AAM83929"/>
    </conflict>
</comment>
<comment type="sequence caution" evidence="2">
    <conflict type="erroneous initiation">
        <sequence resource="EMBL-CDS" id="AAS63320"/>
    </conflict>
</comment>
<accession>Q8ZAB3</accession>
<accession>Q0WAB5</accession>
<keyword id="KW-0001">2Fe-2S</keyword>
<keyword id="KW-0028">Amino-acid biosynthesis</keyword>
<keyword id="KW-0100">Branched-chain amino acid biosynthesis</keyword>
<keyword id="KW-0408">Iron</keyword>
<keyword id="KW-0411">Iron-sulfur</keyword>
<keyword id="KW-0456">Lyase</keyword>
<keyword id="KW-0460">Magnesium</keyword>
<keyword id="KW-0479">Metal-binding</keyword>
<keyword id="KW-1185">Reference proteome</keyword>
<sequence>MPKYRSHTTTHGRNMAGARALWRATGMTDDDFGKPIIAVVNSFTQFVPGHVHLRDLGKLVAEQIVASGGVAKEFNTIAVDDGIAMGHGGMLYSLPSRELIADSVEYMVNAHCADAMVCISNCDKITPGMLMASLRLNIPVIFVSGGPMEAGKTKLSDKIIKLDLIDAMIQGANPNVSDEESAQIERSACPTCGSCSGMFTANSMNCLNEALGLALPGNGSLLATHADRKQLFLDAGKHIVALTKRYYEQDDVSALPRNIANKAAFENAMILDIAMGGSTNTVLHLLAAAQEGEIDFSMTDIDHLSRKVPHLCKVAPSTQKYHMEDVHRAGGVIGILGELDRAGLLNRDVSNVLGLNLTQTLEAYDVMLTQDEGVKQMYAAGPAGIRTTKAFSQDCRYPSLDTDREEGCIRTREHAYSQDGGLAVLYGNIAADGCIVKTAGVDKDSLTFRGPAKVFESQDEAVEAILGGKVVAGDVVVIRYEGPKGGPGMQEMLYPTTYLKSMGLGKSCALLTDGRFSGGTSGLSIGHVSPEAASGGLIGLVQDGDFINIDIPNRGIVLDVSEAELAARRETEEAHGDAAWSPKGRERQVSYALRAYAMLATSADKGAVRDKSKLGG</sequence>
<proteinExistence type="inferred from homology"/>
<gene>
    <name evidence="1" type="primary">ilvD</name>
    <name type="ordered locus">YPO3897</name>
    <name type="ordered locus">y0338</name>
    <name type="ordered locus">YP_3150</name>
</gene>
<evidence type="ECO:0000255" key="1">
    <source>
        <dbReference type="HAMAP-Rule" id="MF_00012"/>
    </source>
</evidence>
<evidence type="ECO:0000305" key="2"/>
<reference key="1">
    <citation type="journal article" date="2001" name="Nature">
        <title>Genome sequence of Yersinia pestis, the causative agent of plague.</title>
        <authorList>
            <person name="Parkhill J."/>
            <person name="Wren B.W."/>
            <person name="Thomson N.R."/>
            <person name="Titball R.W."/>
            <person name="Holden M.T.G."/>
            <person name="Prentice M.B."/>
            <person name="Sebaihia M."/>
            <person name="James K.D."/>
            <person name="Churcher C.M."/>
            <person name="Mungall K.L."/>
            <person name="Baker S."/>
            <person name="Basham D."/>
            <person name="Bentley S.D."/>
            <person name="Brooks K."/>
            <person name="Cerdeno-Tarraga A.-M."/>
            <person name="Chillingworth T."/>
            <person name="Cronin A."/>
            <person name="Davies R.M."/>
            <person name="Davis P."/>
            <person name="Dougan G."/>
            <person name="Feltwell T."/>
            <person name="Hamlin N."/>
            <person name="Holroyd S."/>
            <person name="Jagels K."/>
            <person name="Karlyshev A.V."/>
            <person name="Leather S."/>
            <person name="Moule S."/>
            <person name="Oyston P.C.F."/>
            <person name="Quail M.A."/>
            <person name="Rutherford K.M."/>
            <person name="Simmonds M."/>
            <person name="Skelton J."/>
            <person name="Stevens K."/>
            <person name="Whitehead S."/>
            <person name="Barrell B.G."/>
        </authorList>
    </citation>
    <scope>NUCLEOTIDE SEQUENCE [LARGE SCALE GENOMIC DNA]</scope>
    <source>
        <strain>CO-92 / Biovar Orientalis</strain>
    </source>
</reference>
<reference key="2">
    <citation type="journal article" date="2002" name="J. Bacteriol.">
        <title>Genome sequence of Yersinia pestis KIM.</title>
        <authorList>
            <person name="Deng W."/>
            <person name="Burland V."/>
            <person name="Plunkett G. III"/>
            <person name="Boutin A."/>
            <person name="Mayhew G.F."/>
            <person name="Liss P."/>
            <person name="Perna N.T."/>
            <person name="Rose D.J."/>
            <person name="Mau B."/>
            <person name="Zhou S."/>
            <person name="Schwartz D.C."/>
            <person name="Fetherston J.D."/>
            <person name="Lindler L.E."/>
            <person name="Brubaker R.R."/>
            <person name="Plano G.V."/>
            <person name="Straley S.C."/>
            <person name="McDonough K.A."/>
            <person name="Nilles M.L."/>
            <person name="Matson J.S."/>
            <person name="Blattner F.R."/>
            <person name="Perry R.D."/>
        </authorList>
    </citation>
    <scope>NUCLEOTIDE SEQUENCE [LARGE SCALE GENOMIC DNA]</scope>
    <source>
        <strain>KIM10+ / Biovar Mediaevalis</strain>
    </source>
</reference>
<reference key="3">
    <citation type="journal article" date="2004" name="DNA Res.">
        <title>Complete genome sequence of Yersinia pestis strain 91001, an isolate avirulent to humans.</title>
        <authorList>
            <person name="Song Y."/>
            <person name="Tong Z."/>
            <person name="Wang J."/>
            <person name="Wang L."/>
            <person name="Guo Z."/>
            <person name="Han Y."/>
            <person name="Zhang J."/>
            <person name="Pei D."/>
            <person name="Zhou D."/>
            <person name="Qin H."/>
            <person name="Pang X."/>
            <person name="Han Y."/>
            <person name="Zhai J."/>
            <person name="Li M."/>
            <person name="Cui B."/>
            <person name="Qi Z."/>
            <person name="Jin L."/>
            <person name="Dai R."/>
            <person name="Chen F."/>
            <person name="Li S."/>
            <person name="Ye C."/>
            <person name="Du Z."/>
            <person name="Lin W."/>
            <person name="Wang J."/>
            <person name="Yu J."/>
            <person name="Yang H."/>
            <person name="Wang J."/>
            <person name="Huang P."/>
            <person name="Yang R."/>
        </authorList>
    </citation>
    <scope>NUCLEOTIDE SEQUENCE [LARGE SCALE GENOMIC DNA]</scope>
    <source>
        <strain>91001 / Biovar Mediaevalis</strain>
    </source>
</reference>
<protein>
    <recommendedName>
        <fullName evidence="1">Dihydroxy-acid dehydratase</fullName>
        <shortName evidence="1">DAD</shortName>
        <ecNumber evidence="1">4.2.1.9</ecNumber>
    </recommendedName>
</protein>
<name>ILVD_YERPE</name>
<feature type="chain" id="PRO_0000103535" description="Dihydroxy-acid dehydratase">
    <location>
        <begin position="1"/>
        <end position="616"/>
    </location>
</feature>
<feature type="active site" description="Proton acceptor" evidence="1">
    <location>
        <position position="517"/>
    </location>
</feature>
<feature type="binding site" evidence="1">
    <location>
        <position position="81"/>
    </location>
    <ligand>
        <name>Mg(2+)</name>
        <dbReference type="ChEBI" id="CHEBI:18420"/>
    </ligand>
</feature>
<feature type="binding site" evidence="1">
    <location>
        <position position="122"/>
    </location>
    <ligand>
        <name>[2Fe-2S] cluster</name>
        <dbReference type="ChEBI" id="CHEBI:190135"/>
    </ligand>
</feature>
<feature type="binding site" evidence="1">
    <location>
        <position position="123"/>
    </location>
    <ligand>
        <name>Mg(2+)</name>
        <dbReference type="ChEBI" id="CHEBI:18420"/>
    </ligand>
</feature>
<feature type="binding site" description="via carbamate group" evidence="1">
    <location>
        <position position="124"/>
    </location>
    <ligand>
        <name>Mg(2+)</name>
        <dbReference type="ChEBI" id="CHEBI:18420"/>
    </ligand>
</feature>
<feature type="binding site" evidence="1">
    <location>
        <position position="195"/>
    </location>
    <ligand>
        <name>[2Fe-2S] cluster</name>
        <dbReference type="ChEBI" id="CHEBI:190135"/>
    </ligand>
</feature>
<feature type="binding site" evidence="1">
    <location>
        <position position="491"/>
    </location>
    <ligand>
        <name>Mg(2+)</name>
        <dbReference type="ChEBI" id="CHEBI:18420"/>
    </ligand>
</feature>
<feature type="modified residue" description="N6-carboxylysine" evidence="1">
    <location>
        <position position="124"/>
    </location>
</feature>
<dbReference type="EC" id="4.2.1.9" evidence="1"/>
<dbReference type="EMBL" id="AL590842">
    <property type="protein sequence ID" value="CAL22483.1"/>
    <property type="molecule type" value="Genomic_DNA"/>
</dbReference>
<dbReference type="EMBL" id="AE009952">
    <property type="protein sequence ID" value="AAM83929.1"/>
    <property type="status" value="ALT_INIT"/>
    <property type="molecule type" value="Genomic_DNA"/>
</dbReference>
<dbReference type="EMBL" id="AE017042">
    <property type="protein sequence ID" value="AAS63320.1"/>
    <property type="status" value="ALT_INIT"/>
    <property type="molecule type" value="Genomic_DNA"/>
</dbReference>
<dbReference type="PIR" id="AH0474">
    <property type="entry name" value="AH0474"/>
</dbReference>
<dbReference type="RefSeq" id="WP_002212014.1">
    <property type="nucleotide sequence ID" value="NZ_WUCM01000095.1"/>
</dbReference>
<dbReference type="RefSeq" id="YP_002348773.1">
    <property type="nucleotide sequence ID" value="NC_003143.1"/>
</dbReference>
<dbReference type="SMR" id="Q8ZAB3"/>
<dbReference type="IntAct" id="Q8ZAB3">
    <property type="interactions" value="6"/>
</dbReference>
<dbReference type="STRING" id="214092.YPO3897"/>
<dbReference type="PaxDb" id="214092-YPO3897"/>
<dbReference type="EnsemblBacteria" id="AAS63320">
    <property type="protein sequence ID" value="AAS63320"/>
    <property type="gene ID" value="YP_3150"/>
</dbReference>
<dbReference type="GeneID" id="57974808"/>
<dbReference type="KEGG" id="ype:YPO3897"/>
<dbReference type="KEGG" id="ypk:y0338"/>
<dbReference type="KEGG" id="ypm:YP_3150"/>
<dbReference type="PATRIC" id="fig|214092.21.peg.4425"/>
<dbReference type="eggNOG" id="COG0129">
    <property type="taxonomic scope" value="Bacteria"/>
</dbReference>
<dbReference type="HOGENOM" id="CLU_014271_4_2_6"/>
<dbReference type="OMA" id="STQGRNM"/>
<dbReference type="OrthoDB" id="9807077at2"/>
<dbReference type="UniPathway" id="UPA00047">
    <property type="reaction ID" value="UER00057"/>
</dbReference>
<dbReference type="UniPathway" id="UPA00049">
    <property type="reaction ID" value="UER00061"/>
</dbReference>
<dbReference type="Proteomes" id="UP000000815">
    <property type="component" value="Chromosome"/>
</dbReference>
<dbReference type="Proteomes" id="UP000001019">
    <property type="component" value="Chromosome"/>
</dbReference>
<dbReference type="Proteomes" id="UP000002490">
    <property type="component" value="Chromosome"/>
</dbReference>
<dbReference type="GO" id="GO:0005829">
    <property type="term" value="C:cytosol"/>
    <property type="evidence" value="ECO:0000318"/>
    <property type="project" value="GO_Central"/>
</dbReference>
<dbReference type="GO" id="GO:0051537">
    <property type="term" value="F:2 iron, 2 sulfur cluster binding"/>
    <property type="evidence" value="ECO:0007669"/>
    <property type="project" value="UniProtKB-UniRule"/>
</dbReference>
<dbReference type="GO" id="GO:0004160">
    <property type="term" value="F:dihydroxy-acid dehydratase activity"/>
    <property type="evidence" value="ECO:0007669"/>
    <property type="project" value="UniProtKB-UniRule"/>
</dbReference>
<dbReference type="GO" id="GO:0016836">
    <property type="term" value="F:hydro-lyase activity"/>
    <property type="evidence" value="ECO:0000318"/>
    <property type="project" value="GO_Central"/>
</dbReference>
<dbReference type="GO" id="GO:0000287">
    <property type="term" value="F:magnesium ion binding"/>
    <property type="evidence" value="ECO:0007669"/>
    <property type="project" value="UniProtKB-UniRule"/>
</dbReference>
<dbReference type="GO" id="GO:0009097">
    <property type="term" value="P:isoleucine biosynthetic process"/>
    <property type="evidence" value="ECO:0007669"/>
    <property type="project" value="UniProtKB-UniRule"/>
</dbReference>
<dbReference type="GO" id="GO:0009099">
    <property type="term" value="P:L-valine biosynthetic process"/>
    <property type="evidence" value="ECO:0007669"/>
    <property type="project" value="UniProtKB-UniRule"/>
</dbReference>
<dbReference type="FunFam" id="3.50.30.80:FF:000001">
    <property type="entry name" value="Dihydroxy-acid dehydratase"/>
    <property type="match status" value="1"/>
</dbReference>
<dbReference type="Gene3D" id="3.50.30.80">
    <property type="entry name" value="IlvD/EDD C-terminal domain-like"/>
    <property type="match status" value="1"/>
</dbReference>
<dbReference type="HAMAP" id="MF_00012">
    <property type="entry name" value="IlvD"/>
    <property type="match status" value="1"/>
</dbReference>
<dbReference type="InterPro" id="IPR042096">
    <property type="entry name" value="Dihydro-acid_dehy_C"/>
</dbReference>
<dbReference type="InterPro" id="IPR004404">
    <property type="entry name" value="DihydroxyA_deHydtase"/>
</dbReference>
<dbReference type="InterPro" id="IPR020558">
    <property type="entry name" value="DiOHA_6PGluconate_deHydtase_CS"/>
</dbReference>
<dbReference type="InterPro" id="IPR056740">
    <property type="entry name" value="ILV_EDD_C"/>
</dbReference>
<dbReference type="InterPro" id="IPR000581">
    <property type="entry name" value="ILV_EDD_N"/>
</dbReference>
<dbReference type="InterPro" id="IPR037237">
    <property type="entry name" value="IlvD/EDD_N"/>
</dbReference>
<dbReference type="NCBIfam" id="TIGR00110">
    <property type="entry name" value="ilvD"/>
    <property type="match status" value="1"/>
</dbReference>
<dbReference type="NCBIfam" id="NF009103">
    <property type="entry name" value="PRK12448.1"/>
    <property type="match status" value="1"/>
</dbReference>
<dbReference type="PANTHER" id="PTHR43661">
    <property type="entry name" value="D-XYLONATE DEHYDRATASE"/>
    <property type="match status" value="1"/>
</dbReference>
<dbReference type="PANTHER" id="PTHR43661:SF3">
    <property type="entry name" value="D-XYLONATE DEHYDRATASE YAGF-RELATED"/>
    <property type="match status" value="1"/>
</dbReference>
<dbReference type="Pfam" id="PF24877">
    <property type="entry name" value="ILV_EDD_C"/>
    <property type="match status" value="1"/>
</dbReference>
<dbReference type="Pfam" id="PF00920">
    <property type="entry name" value="ILVD_EDD_N"/>
    <property type="match status" value="1"/>
</dbReference>
<dbReference type="SUPFAM" id="SSF143975">
    <property type="entry name" value="IlvD/EDD N-terminal domain-like"/>
    <property type="match status" value="1"/>
</dbReference>
<dbReference type="SUPFAM" id="SSF52016">
    <property type="entry name" value="LeuD/IlvD-like"/>
    <property type="match status" value="1"/>
</dbReference>
<dbReference type="PROSITE" id="PS00886">
    <property type="entry name" value="ILVD_EDD_1"/>
    <property type="match status" value="1"/>
</dbReference>
<dbReference type="PROSITE" id="PS00887">
    <property type="entry name" value="ILVD_EDD_2"/>
    <property type="match status" value="1"/>
</dbReference>
<organism>
    <name type="scientific">Yersinia pestis</name>
    <dbReference type="NCBI Taxonomy" id="632"/>
    <lineage>
        <taxon>Bacteria</taxon>
        <taxon>Pseudomonadati</taxon>
        <taxon>Pseudomonadota</taxon>
        <taxon>Gammaproteobacteria</taxon>
        <taxon>Enterobacterales</taxon>
        <taxon>Yersiniaceae</taxon>
        <taxon>Yersinia</taxon>
    </lineage>
</organism>